<reference key="1">
    <citation type="journal article" date="2009" name="PLoS ONE">
        <title>Salmonella paratyphi C: genetic divergence from Salmonella choleraesuis and pathogenic convergence with Salmonella typhi.</title>
        <authorList>
            <person name="Liu W.-Q."/>
            <person name="Feng Y."/>
            <person name="Wang Y."/>
            <person name="Zou Q.-H."/>
            <person name="Chen F."/>
            <person name="Guo J.-T."/>
            <person name="Peng Y.-H."/>
            <person name="Jin Y."/>
            <person name="Li Y.-G."/>
            <person name="Hu S.-N."/>
            <person name="Johnston R.N."/>
            <person name="Liu G.-R."/>
            <person name="Liu S.-L."/>
        </authorList>
    </citation>
    <scope>NUCLEOTIDE SEQUENCE [LARGE SCALE GENOMIC DNA]</scope>
    <source>
        <strain>RKS4594</strain>
    </source>
</reference>
<dbReference type="EMBL" id="CP000857">
    <property type="protein sequence ID" value="ACN47885.1"/>
    <property type="molecule type" value="Genomic_DNA"/>
</dbReference>
<dbReference type="RefSeq" id="WP_001051798.1">
    <property type="nucleotide sequence ID" value="NC_012125.1"/>
</dbReference>
<dbReference type="SMR" id="C0Q1W9"/>
<dbReference type="GeneID" id="97607673"/>
<dbReference type="KEGG" id="sei:SPC_3809"/>
<dbReference type="HOGENOM" id="CLU_190949_1_1_6"/>
<dbReference type="Proteomes" id="UP000001599">
    <property type="component" value="Chromosome"/>
</dbReference>
<dbReference type="GO" id="GO:0022625">
    <property type="term" value="C:cytosolic large ribosomal subunit"/>
    <property type="evidence" value="ECO:0007669"/>
    <property type="project" value="TreeGrafter"/>
</dbReference>
<dbReference type="GO" id="GO:0003735">
    <property type="term" value="F:structural constituent of ribosome"/>
    <property type="evidence" value="ECO:0007669"/>
    <property type="project" value="InterPro"/>
</dbReference>
<dbReference type="GO" id="GO:0006412">
    <property type="term" value="P:translation"/>
    <property type="evidence" value="ECO:0007669"/>
    <property type="project" value="UniProtKB-UniRule"/>
</dbReference>
<dbReference type="FunFam" id="2.20.28.120:FF:000001">
    <property type="entry name" value="50S ribosomal protein L33"/>
    <property type="match status" value="1"/>
</dbReference>
<dbReference type="Gene3D" id="2.20.28.120">
    <property type="entry name" value="Ribosomal protein L33"/>
    <property type="match status" value="1"/>
</dbReference>
<dbReference type="HAMAP" id="MF_00294">
    <property type="entry name" value="Ribosomal_bL33"/>
    <property type="match status" value="1"/>
</dbReference>
<dbReference type="InterPro" id="IPR001705">
    <property type="entry name" value="Ribosomal_bL33"/>
</dbReference>
<dbReference type="InterPro" id="IPR018264">
    <property type="entry name" value="Ribosomal_bL33_CS"/>
</dbReference>
<dbReference type="InterPro" id="IPR038584">
    <property type="entry name" value="Ribosomal_bL33_sf"/>
</dbReference>
<dbReference type="InterPro" id="IPR011332">
    <property type="entry name" value="Ribosomal_zn-bd"/>
</dbReference>
<dbReference type="NCBIfam" id="NF001860">
    <property type="entry name" value="PRK00595.1"/>
    <property type="match status" value="1"/>
</dbReference>
<dbReference type="NCBIfam" id="TIGR01023">
    <property type="entry name" value="rpmG_bact"/>
    <property type="match status" value="1"/>
</dbReference>
<dbReference type="PANTHER" id="PTHR15238">
    <property type="entry name" value="54S RIBOSOMAL PROTEIN L39, MITOCHONDRIAL"/>
    <property type="match status" value="1"/>
</dbReference>
<dbReference type="PANTHER" id="PTHR15238:SF1">
    <property type="entry name" value="LARGE RIBOSOMAL SUBUNIT PROTEIN BL33M"/>
    <property type="match status" value="1"/>
</dbReference>
<dbReference type="Pfam" id="PF00471">
    <property type="entry name" value="Ribosomal_L33"/>
    <property type="match status" value="1"/>
</dbReference>
<dbReference type="SUPFAM" id="SSF57829">
    <property type="entry name" value="Zn-binding ribosomal proteins"/>
    <property type="match status" value="1"/>
</dbReference>
<dbReference type="PROSITE" id="PS00582">
    <property type="entry name" value="RIBOSOMAL_L33"/>
    <property type="match status" value="1"/>
</dbReference>
<comment type="similarity">
    <text evidence="1">Belongs to the bacterial ribosomal protein bL33 family.</text>
</comment>
<accession>C0Q1W9</accession>
<gene>
    <name evidence="1" type="primary">rpmG</name>
    <name type="ordered locus">SPC_3809</name>
</gene>
<proteinExistence type="inferred from homology"/>
<organism>
    <name type="scientific">Salmonella paratyphi C (strain RKS4594)</name>
    <dbReference type="NCBI Taxonomy" id="476213"/>
    <lineage>
        <taxon>Bacteria</taxon>
        <taxon>Pseudomonadati</taxon>
        <taxon>Pseudomonadota</taxon>
        <taxon>Gammaproteobacteria</taxon>
        <taxon>Enterobacterales</taxon>
        <taxon>Enterobacteriaceae</taxon>
        <taxon>Salmonella</taxon>
    </lineage>
</organism>
<sequence length="55" mass="6372">MAKGIREKIKLVSSAGTGHFYTTTKNKRTKPEKLELKKFDPVVRQHVIYKEAKIK</sequence>
<name>RL33_SALPC</name>
<evidence type="ECO:0000255" key="1">
    <source>
        <dbReference type="HAMAP-Rule" id="MF_00294"/>
    </source>
</evidence>
<evidence type="ECO:0000305" key="2"/>
<keyword id="KW-0687">Ribonucleoprotein</keyword>
<keyword id="KW-0689">Ribosomal protein</keyword>
<protein>
    <recommendedName>
        <fullName evidence="1">Large ribosomal subunit protein bL33</fullName>
    </recommendedName>
    <alternativeName>
        <fullName evidence="2">50S ribosomal protein L33</fullName>
    </alternativeName>
</protein>
<feature type="chain" id="PRO_1000194062" description="Large ribosomal subunit protein bL33">
    <location>
        <begin position="1"/>
        <end position="55"/>
    </location>
</feature>